<accession>A3Q975</accession>
<comment type="function">
    <text evidence="1">DNA-dependent RNA polymerase catalyzes the transcription of DNA into RNA using the four ribonucleoside triphosphates as substrates.</text>
</comment>
<comment type="catalytic activity">
    <reaction evidence="1">
        <text>RNA(n) + a ribonucleoside 5'-triphosphate = RNA(n+1) + diphosphate</text>
        <dbReference type="Rhea" id="RHEA:21248"/>
        <dbReference type="Rhea" id="RHEA-COMP:14527"/>
        <dbReference type="Rhea" id="RHEA-COMP:17342"/>
        <dbReference type="ChEBI" id="CHEBI:33019"/>
        <dbReference type="ChEBI" id="CHEBI:61557"/>
        <dbReference type="ChEBI" id="CHEBI:140395"/>
        <dbReference type="EC" id="2.7.7.6"/>
    </reaction>
</comment>
<comment type="subunit">
    <text evidence="1">The RNAP catalytic core consists of 2 alpha, 1 beta, 1 beta' and 1 omega subunit. When a sigma factor is associated with the core the holoenzyme is formed, which can initiate transcription.</text>
</comment>
<comment type="similarity">
    <text evidence="1">Belongs to the RNA polymerase beta chain family.</text>
</comment>
<feature type="chain" id="PRO_0000300399" description="DNA-directed RNA polymerase subunit beta">
    <location>
        <begin position="1"/>
        <end position="1343"/>
    </location>
</feature>
<protein>
    <recommendedName>
        <fullName evidence="1">DNA-directed RNA polymerase subunit beta</fullName>
        <shortName evidence="1">RNAP subunit beta</shortName>
        <ecNumber evidence="1">2.7.7.6</ecNumber>
    </recommendedName>
    <alternativeName>
        <fullName evidence="1">RNA polymerase subunit beta</fullName>
    </alternativeName>
    <alternativeName>
        <fullName evidence="1">Transcriptase subunit beta</fullName>
    </alternativeName>
</protein>
<reference key="1">
    <citation type="submission" date="2007-03" db="EMBL/GenBank/DDBJ databases">
        <title>Complete sequence of Shewanella loihica PV-4.</title>
        <authorList>
            <consortium name="US DOE Joint Genome Institute"/>
            <person name="Copeland A."/>
            <person name="Lucas S."/>
            <person name="Lapidus A."/>
            <person name="Barry K."/>
            <person name="Detter J.C."/>
            <person name="Glavina del Rio T."/>
            <person name="Hammon N."/>
            <person name="Israni S."/>
            <person name="Dalin E."/>
            <person name="Tice H."/>
            <person name="Pitluck S."/>
            <person name="Chain P."/>
            <person name="Malfatti S."/>
            <person name="Shin M."/>
            <person name="Vergez L."/>
            <person name="Schmutz J."/>
            <person name="Larimer F."/>
            <person name="Land M."/>
            <person name="Hauser L."/>
            <person name="Kyrpides N."/>
            <person name="Mikhailova N."/>
            <person name="Romine M.F."/>
            <person name="Serres G."/>
            <person name="Fredrickson J."/>
            <person name="Tiedje J."/>
            <person name="Richardson P."/>
        </authorList>
    </citation>
    <scope>NUCLEOTIDE SEQUENCE [LARGE SCALE GENOMIC DNA]</scope>
    <source>
        <strain>ATCC BAA-1088 / PV-4</strain>
    </source>
</reference>
<organism>
    <name type="scientific">Shewanella loihica (strain ATCC BAA-1088 / PV-4)</name>
    <dbReference type="NCBI Taxonomy" id="323850"/>
    <lineage>
        <taxon>Bacteria</taxon>
        <taxon>Pseudomonadati</taxon>
        <taxon>Pseudomonadota</taxon>
        <taxon>Gammaproteobacteria</taxon>
        <taxon>Alteromonadales</taxon>
        <taxon>Shewanellaceae</taxon>
        <taxon>Shewanella</taxon>
    </lineage>
</organism>
<proteinExistence type="inferred from homology"/>
<dbReference type="EC" id="2.7.7.6" evidence="1"/>
<dbReference type="EMBL" id="CP000606">
    <property type="protein sequence ID" value="ABO22023.1"/>
    <property type="molecule type" value="Genomic_DNA"/>
</dbReference>
<dbReference type="RefSeq" id="WP_011863960.1">
    <property type="nucleotide sequence ID" value="NC_009092.1"/>
</dbReference>
<dbReference type="SMR" id="A3Q975"/>
<dbReference type="STRING" id="323850.Shew_0151"/>
<dbReference type="KEGG" id="slo:Shew_0151"/>
<dbReference type="eggNOG" id="COG0085">
    <property type="taxonomic scope" value="Bacteria"/>
</dbReference>
<dbReference type="HOGENOM" id="CLU_000524_4_3_6"/>
<dbReference type="OrthoDB" id="9803954at2"/>
<dbReference type="Proteomes" id="UP000001558">
    <property type="component" value="Chromosome"/>
</dbReference>
<dbReference type="GO" id="GO:0000428">
    <property type="term" value="C:DNA-directed RNA polymerase complex"/>
    <property type="evidence" value="ECO:0007669"/>
    <property type="project" value="UniProtKB-KW"/>
</dbReference>
<dbReference type="GO" id="GO:0003677">
    <property type="term" value="F:DNA binding"/>
    <property type="evidence" value="ECO:0007669"/>
    <property type="project" value="UniProtKB-UniRule"/>
</dbReference>
<dbReference type="GO" id="GO:0003899">
    <property type="term" value="F:DNA-directed RNA polymerase activity"/>
    <property type="evidence" value="ECO:0007669"/>
    <property type="project" value="UniProtKB-UniRule"/>
</dbReference>
<dbReference type="GO" id="GO:0032549">
    <property type="term" value="F:ribonucleoside binding"/>
    <property type="evidence" value="ECO:0007669"/>
    <property type="project" value="InterPro"/>
</dbReference>
<dbReference type="GO" id="GO:0006351">
    <property type="term" value="P:DNA-templated transcription"/>
    <property type="evidence" value="ECO:0007669"/>
    <property type="project" value="UniProtKB-UniRule"/>
</dbReference>
<dbReference type="CDD" id="cd00653">
    <property type="entry name" value="RNA_pol_B_RPB2"/>
    <property type="match status" value="1"/>
</dbReference>
<dbReference type="FunFam" id="2.40.270.10:FF:000003">
    <property type="entry name" value="DNA-directed RNA polymerase subunit beta"/>
    <property type="match status" value="1"/>
</dbReference>
<dbReference type="FunFam" id="2.40.270.10:FF:000004">
    <property type="entry name" value="DNA-directed RNA polymerase subunit beta"/>
    <property type="match status" value="1"/>
</dbReference>
<dbReference type="FunFam" id="2.40.50.100:FF:000006">
    <property type="entry name" value="DNA-directed RNA polymerase subunit beta"/>
    <property type="match status" value="1"/>
</dbReference>
<dbReference type="FunFam" id="2.40.50.150:FF:000001">
    <property type="entry name" value="DNA-directed RNA polymerase subunit beta"/>
    <property type="match status" value="1"/>
</dbReference>
<dbReference type="FunFam" id="3.90.1100.10:FF:000002">
    <property type="entry name" value="DNA-directed RNA polymerase subunit beta"/>
    <property type="match status" value="1"/>
</dbReference>
<dbReference type="FunFam" id="3.90.1110.10:FF:000001">
    <property type="entry name" value="DNA-directed RNA polymerase subunit beta"/>
    <property type="match status" value="1"/>
</dbReference>
<dbReference type="FunFam" id="3.90.1110.10:FF:000004">
    <property type="entry name" value="DNA-directed RNA polymerase subunit beta"/>
    <property type="match status" value="1"/>
</dbReference>
<dbReference type="FunFam" id="3.90.1800.10:FF:000001">
    <property type="entry name" value="DNA-directed RNA polymerase subunit beta"/>
    <property type="match status" value="1"/>
</dbReference>
<dbReference type="Gene3D" id="2.40.50.100">
    <property type="match status" value="1"/>
</dbReference>
<dbReference type="Gene3D" id="2.40.50.150">
    <property type="match status" value="1"/>
</dbReference>
<dbReference type="Gene3D" id="3.90.1100.10">
    <property type="match status" value="2"/>
</dbReference>
<dbReference type="Gene3D" id="2.30.150.10">
    <property type="entry name" value="DNA-directed RNA polymerase, beta subunit, external 1 domain"/>
    <property type="match status" value="1"/>
</dbReference>
<dbReference type="Gene3D" id="2.40.270.10">
    <property type="entry name" value="DNA-directed RNA polymerase, subunit 2, domain 6"/>
    <property type="match status" value="2"/>
</dbReference>
<dbReference type="Gene3D" id="3.90.1800.10">
    <property type="entry name" value="RNA polymerase alpha subunit dimerisation domain"/>
    <property type="match status" value="1"/>
</dbReference>
<dbReference type="Gene3D" id="3.90.1110.10">
    <property type="entry name" value="RNA polymerase Rpb2, domain 2"/>
    <property type="match status" value="2"/>
</dbReference>
<dbReference type="HAMAP" id="MF_01321">
    <property type="entry name" value="RNApol_bact_RpoB"/>
    <property type="match status" value="1"/>
</dbReference>
<dbReference type="InterPro" id="IPR042107">
    <property type="entry name" value="DNA-dir_RNA_pol_bsu_ext_1_sf"/>
</dbReference>
<dbReference type="InterPro" id="IPR019462">
    <property type="entry name" value="DNA-dir_RNA_pol_bsu_external_1"/>
</dbReference>
<dbReference type="InterPro" id="IPR015712">
    <property type="entry name" value="DNA-dir_RNA_pol_su2"/>
</dbReference>
<dbReference type="InterPro" id="IPR007120">
    <property type="entry name" value="DNA-dir_RNAP_su2_dom"/>
</dbReference>
<dbReference type="InterPro" id="IPR037033">
    <property type="entry name" value="DNA-dir_RNAP_su2_hyb_sf"/>
</dbReference>
<dbReference type="InterPro" id="IPR010243">
    <property type="entry name" value="RNA_pol_bsu_bac"/>
</dbReference>
<dbReference type="InterPro" id="IPR007121">
    <property type="entry name" value="RNA_pol_bsu_CS"/>
</dbReference>
<dbReference type="InterPro" id="IPR007644">
    <property type="entry name" value="RNA_pol_bsu_protrusion"/>
</dbReference>
<dbReference type="InterPro" id="IPR007642">
    <property type="entry name" value="RNA_pol_Rpb2_2"/>
</dbReference>
<dbReference type="InterPro" id="IPR037034">
    <property type="entry name" value="RNA_pol_Rpb2_2_sf"/>
</dbReference>
<dbReference type="InterPro" id="IPR007645">
    <property type="entry name" value="RNA_pol_Rpb2_3"/>
</dbReference>
<dbReference type="InterPro" id="IPR007641">
    <property type="entry name" value="RNA_pol_Rpb2_7"/>
</dbReference>
<dbReference type="InterPro" id="IPR014724">
    <property type="entry name" value="RNA_pol_RPB2_OB-fold"/>
</dbReference>
<dbReference type="NCBIfam" id="NF001616">
    <property type="entry name" value="PRK00405.1"/>
    <property type="match status" value="1"/>
</dbReference>
<dbReference type="NCBIfam" id="TIGR02013">
    <property type="entry name" value="rpoB"/>
    <property type="match status" value="1"/>
</dbReference>
<dbReference type="PANTHER" id="PTHR20856">
    <property type="entry name" value="DNA-DIRECTED RNA POLYMERASE I SUBUNIT 2"/>
    <property type="match status" value="1"/>
</dbReference>
<dbReference type="Pfam" id="PF04563">
    <property type="entry name" value="RNA_pol_Rpb2_1"/>
    <property type="match status" value="1"/>
</dbReference>
<dbReference type="Pfam" id="PF04561">
    <property type="entry name" value="RNA_pol_Rpb2_2"/>
    <property type="match status" value="2"/>
</dbReference>
<dbReference type="Pfam" id="PF04565">
    <property type="entry name" value="RNA_pol_Rpb2_3"/>
    <property type="match status" value="1"/>
</dbReference>
<dbReference type="Pfam" id="PF10385">
    <property type="entry name" value="RNA_pol_Rpb2_45"/>
    <property type="match status" value="1"/>
</dbReference>
<dbReference type="Pfam" id="PF00562">
    <property type="entry name" value="RNA_pol_Rpb2_6"/>
    <property type="match status" value="1"/>
</dbReference>
<dbReference type="Pfam" id="PF04560">
    <property type="entry name" value="RNA_pol_Rpb2_7"/>
    <property type="match status" value="1"/>
</dbReference>
<dbReference type="SUPFAM" id="SSF64484">
    <property type="entry name" value="beta and beta-prime subunits of DNA dependent RNA-polymerase"/>
    <property type="match status" value="1"/>
</dbReference>
<dbReference type="PROSITE" id="PS01166">
    <property type="entry name" value="RNA_POL_BETA"/>
    <property type="match status" value="1"/>
</dbReference>
<keyword id="KW-0240">DNA-directed RNA polymerase</keyword>
<keyword id="KW-0548">Nucleotidyltransferase</keyword>
<keyword id="KW-1185">Reference proteome</keyword>
<keyword id="KW-0804">Transcription</keyword>
<keyword id="KW-0808">Transferase</keyword>
<evidence type="ECO:0000255" key="1">
    <source>
        <dbReference type="HAMAP-Rule" id="MF_01321"/>
    </source>
</evidence>
<gene>
    <name evidence="1" type="primary">rpoB</name>
    <name type="ordered locus">Shew_0151</name>
</gene>
<sequence>MVYSYSEKKRIRKDFGKRPQVLDIPYLLSIQLDSFKKFTDQDPTGERGLEAAFRSVFPIKSFSGNSELQYVSYKLGEPVFDVKECQIRGVTYSAPLRVKLRMVLYDREAAPGTVKDIKEQEVYMGDIPLMTENGTFVINGTERVIVSQLHRSPGVFFDHDRGKTHSSGKVLYNARIIPYRGSWLDFEFDPKDALFVRIDRRRKLAASIILRALDYSTQDILDLFFERVQYKIKKDSLVMALVADRLRGETASYDIKDAEGNIIVEKGRRITARHIRQLEKTNTTELEVPVEYISGKIAAQDYIDPDTGEVLVSANAEISLEDLAKLSMAGIKDIDTLYVNELDHGAYISDTLRIDSTTNRLEALVEIYRMMRPGEPPTKDAAEALFQNLFFSEERYDLSKVGRMKFNRRLGIDDDEGTGILTKEDIVAVMQKIIEIRNGNDEVDDIDHLGNRRIRSVGEMAENQFRVGLVRVERAVRERLSLGDLNELMPQDLINAKPISAAVKEFFGSSQLSQFMDQNNPLSEVTHKRRISALGPGGLTRERAGFEVRDVHPTHYGRLCPIETPEGPNIGLINSLASFARTNSYGFLETPYRKVVDGVITDQVDYLSAIEEGRYVIAQANIEVDADGRMVEEQIACRHKGESTFMRAADVQYMDVSPQQIISVAASLIPFLEHDDANRALMGANMQRQAVPTLRADKPLVGTGIERTLAVDSGVVVAAKRGGYVDYVDASRIVVKVNEDELTPGEAGIDIYNLTKYTRSNQNTCINQRPCCSVGEPVVRGDVLADGPSTDLGDLALGQNMRIAFMPWNGYNFEDSILISERVAQEDRFTTIHIQELSCIARDTKLGSEEITADIPNVGESALSKLDESGIVYIGAEVKGGDILVGKVTPKGETQLTPEEKLLRAIFGEKASDVKDSSLRVPNSVKGTIIDVQVFTRDGVEKDKRAVEIEEMHIAQAKKDLTEEFKILEEGVFGRARNLLIGAGFAEAELDALPRPQLLVQTIEDETKQTELEQLAEQHEELKADFDKKFEIKRRKITQGDDLAPGVLKIVKVYLAVKRTIQPGDKMAGRHGNKGVISKINPIEDMPYDENGNPVDIVLNPLGVPSRMNIGQVLEVHLGAAAKGIGDRITAMLEEQRELAELRGYIKKVYELGEDVQQQVDIDSFTDEEVLRLAKNLKGGIPTATPAFDGAKEKEIKDMLELAGLPTSGQLKLFDGRTGNEFERPVTVGYMYMLKLNHLVDDKMHARSTGSYSLVTQQPLGGKAQFGGQRFGEMEVWALEAYGAAYTLQEMLTVKSDDVNGRTQMYKNIVDGNHQMQPGMPESFNVLLKEIRSLGINIELDQE</sequence>
<name>RPOB_SHELP</name>